<gene>
    <name evidence="1" type="primary">atpH</name>
    <name type="ordered locus">Daro_4111</name>
</gene>
<name>ATPD_DECAR</name>
<sequence length="178" mass="18858">MAESVTIARPYAEALFRTAKESGNLAKWSEQVSLLGQVAANPDVSSAIGDPNVAAPQLVDLFRSACGTAVDAELSNFIQLLSNNDRLGLLPEIAGLYETYKRAEEGTKQADIVSAFPIDDNQVKALIPQLEAVFKTKLEAAVSVDPTLIGGIKVIVGDQMLDASVRGKLDAMATALNN</sequence>
<comment type="function">
    <text evidence="1">F(1)F(0) ATP synthase produces ATP from ADP in the presence of a proton or sodium gradient. F-type ATPases consist of two structural domains, F(1) containing the extramembraneous catalytic core and F(0) containing the membrane proton channel, linked together by a central stalk and a peripheral stalk. During catalysis, ATP synthesis in the catalytic domain of F(1) is coupled via a rotary mechanism of the central stalk subunits to proton translocation.</text>
</comment>
<comment type="function">
    <text evidence="1">This protein is part of the stalk that links CF(0) to CF(1). It either transmits conformational changes from CF(0) to CF(1) or is implicated in proton conduction.</text>
</comment>
<comment type="subunit">
    <text evidence="1">F-type ATPases have 2 components, F(1) - the catalytic core - and F(0) - the membrane proton channel. F(1) has five subunits: alpha(3), beta(3), gamma(1), delta(1), epsilon(1). F(0) has three main subunits: a(1), b(2) and c(10-14). The alpha and beta chains form an alternating ring which encloses part of the gamma chain. F(1) is attached to F(0) by a central stalk formed by the gamma and epsilon chains, while a peripheral stalk is formed by the delta and b chains.</text>
</comment>
<comment type="subcellular location">
    <subcellularLocation>
        <location evidence="1">Cell inner membrane</location>
        <topology evidence="1">Peripheral membrane protein</topology>
    </subcellularLocation>
</comment>
<comment type="similarity">
    <text evidence="1">Belongs to the ATPase delta chain family.</text>
</comment>
<dbReference type="EMBL" id="CP000089">
    <property type="protein sequence ID" value="AAZ48837.1"/>
    <property type="molecule type" value="Genomic_DNA"/>
</dbReference>
<dbReference type="SMR" id="Q477Z4"/>
<dbReference type="STRING" id="159087.Daro_4111"/>
<dbReference type="KEGG" id="dar:Daro_4111"/>
<dbReference type="eggNOG" id="COG0712">
    <property type="taxonomic scope" value="Bacteria"/>
</dbReference>
<dbReference type="HOGENOM" id="CLU_085114_3_0_4"/>
<dbReference type="OrthoDB" id="9816221at2"/>
<dbReference type="GO" id="GO:0005886">
    <property type="term" value="C:plasma membrane"/>
    <property type="evidence" value="ECO:0007669"/>
    <property type="project" value="UniProtKB-SubCell"/>
</dbReference>
<dbReference type="GO" id="GO:0045259">
    <property type="term" value="C:proton-transporting ATP synthase complex"/>
    <property type="evidence" value="ECO:0007669"/>
    <property type="project" value="UniProtKB-KW"/>
</dbReference>
<dbReference type="GO" id="GO:0046933">
    <property type="term" value="F:proton-transporting ATP synthase activity, rotational mechanism"/>
    <property type="evidence" value="ECO:0007669"/>
    <property type="project" value="UniProtKB-UniRule"/>
</dbReference>
<dbReference type="Gene3D" id="1.10.520.20">
    <property type="entry name" value="N-terminal domain of the delta subunit of the F1F0-ATP synthase"/>
    <property type="match status" value="1"/>
</dbReference>
<dbReference type="HAMAP" id="MF_01416">
    <property type="entry name" value="ATP_synth_delta_bact"/>
    <property type="match status" value="1"/>
</dbReference>
<dbReference type="InterPro" id="IPR026015">
    <property type="entry name" value="ATP_synth_OSCP/delta_N_sf"/>
</dbReference>
<dbReference type="InterPro" id="IPR000711">
    <property type="entry name" value="ATPase_OSCP/dsu"/>
</dbReference>
<dbReference type="NCBIfam" id="TIGR01145">
    <property type="entry name" value="ATP_synt_delta"/>
    <property type="match status" value="1"/>
</dbReference>
<dbReference type="NCBIfam" id="NF004402">
    <property type="entry name" value="PRK05758.2-2"/>
    <property type="match status" value="1"/>
</dbReference>
<dbReference type="PANTHER" id="PTHR11910">
    <property type="entry name" value="ATP SYNTHASE DELTA CHAIN"/>
    <property type="match status" value="1"/>
</dbReference>
<dbReference type="Pfam" id="PF00213">
    <property type="entry name" value="OSCP"/>
    <property type="match status" value="1"/>
</dbReference>
<dbReference type="PRINTS" id="PR00125">
    <property type="entry name" value="ATPASEDELTA"/>
</dbReference>
<dbReference type="SUPFAM" id="SSF47928">
    <property type="entry name" value="N-terminal domain of the delta subunit of the F1F0-ATP synthase"/>
    <property type="match status" value="1"/>
</dbReference>
<accession>Q477Z4</accession>
<evidence type="ECO:0000255" key="1">
    <source>
        <dbReference type="HAMAP-Rule" id="MF_01416"/>
    </source>
</evidence>
<feature type="chain" id="PRO_1000184689" description="ATP synthase subunit delta">
    <location>
        <begin position="1"/>
        <end position="178"/>
    </location>
</feature>
<proteinExistence type="inferred from homology"/>
<protein>
    <recommendedName>
        <fullName evidence="1">ATP synthase subunit delta</fullName>
    </recommendedName>
    <alternativeName>
        <fullName evidence="1">ATP synthase F(1) sector subunit delta</fullName>
    </alternativeName>
    <alternativeName>
        <fullName evidence="1">F-type ATPase subunit delta</fullName>
        <shortName evidence="1">F-ATPase subunit delta</shortName>
    </alternativeName>
</protein>
<organism>
    <name type="scientific">Dechloromonas aromatica (strain RCB)</name>
    <dbReference type="NCBI Taxonomy" id="159087"/>
    <lineage>
        <taxon>Bacteria</taxon>
        <taxon>Pseudomonadati</taxon>
        <taxon>Pseudomonadota</taxon>
        <taxon>Betaproteobacteria</taxon>
        <taxon>Rhodocyclales</taxon>
        <taxon>Azonexaceae</taxon>
        <taxon>Dechloromonas</taxon>
    </lineage>
</organism>
<keyword id="KW-0066">ATP synthesis</keyword>
<keyword id="KW-0997">Cell inner membrane</keyword>
<keyword id="KW-1003">Cell membrane</keyword>
<keyword id="KW-0139">CF(1)</keyword>
<keyword id="KW-0375">Hydrogen ion transport</keyword>
<keyword id="KW-0406">Ion transport</keyword>
<keyword id="KW-0472">Membrane</keyword>
<keyword id="KW-0813">Transport</keyword>
<reference key="1">
    <citation type="journal article" date="2009" name="BMC Genomics">
        <title>Metabolic analysis of the soil microbe Dechloromonas aromatica str. RCB: indications of a surprisingly complex life-style and cryptic anaerobic pathways for aromatic degradation.</title>
        <authorList>
            <person name="Salinero K.K."/>
            <person name="Keller K."/>
            <person name="Feil W.S."/>
            <person name="Feil H."/>
            <person name="Trong S."/>
            <person name="Di Bartolo G."/>
            <person name="Lapidus A."/>
        </authorList>
    </citation>
    <scope>NUCLEOTIDE SEQUENCE [LARGE SCALE GENOMIC DNA]</scope>
    <source>
        <strain>RCB</strain>
    </source>
</reference>